<proteinExistence type="evidence at transcript level"/>
<dbReference type="EMBL" id="CR857373">
    <property type="protein sequence ID" value="CAH89667.1"/>
    <property type="molecule type" value="mRNA"/>
</dbReference>
<dbReference type="RefSeq" id="NP_001124753.1">
    <property type="nucleotide sequence ID" value="NM_001131281.2"/>
</dbReference>
<dbReference type="FunCoup" id="Q5REZ0">
    <property type="interactions" value="296"/>
</dbReference>
<dbReference type="STRING" id="9601.ENSPPYP00000001875"/>
<dbReference type="Ensembl" id="ENSPPYT00000001934.3">
    <property type="protein sequence ID" value="ENSPPYP00000001875.2"/>
    <property type="gene ID" value="ENSPPYG00000001624.3"/>
</dbReference>
<dbReference type="GeneID" id="100171603"/>
<dbReference type="KEGG" id="pon:100171603"/>
<dbReference type="CTD" id="7805"/>
<dbReference type="eggNOG" id="ENOG502RY9P">
    <property type="taxonomic scope" value="Eukaryota"/>
</dbReference>
<dbReference type="GeneTree" id="ENSGT00940000153446"/>
<dbReference type="HOGENOM" id="CLU_1065422_0_0_1"/>
<dbReference type="InParanoid" id="Q5REZ0"/>
<dbReference type="OMA" id="QICCCFN"/>
<dbReference type="OrthoDB" id="8733516at2759"/>
<dbReference type="TreeFam" id="TF330843"/>
<dbReference type="Proteomes" id="UP000001595">
    <property type="component" value="Chromosome 1"/>
</dbReference>
<dbReference type="GO" id="GO:0005829">
    <property type="term" value="C:cytosol"/>
    <property type="evidence" value="ECO:0007669"/>
    <property type="project" value="GOC"/>
</dbReference>
<dbReference type="GO" id="GO:0005765">
    <property type="term" value="C:lysosomal membrane"/>
    <property type="evidence" value="ECO:0007669"/>
    <property type="project" value="UniProtKB-SubCell"/>
</dbReference>
<dbReference type="GO" id="GO:0048471">
    <property type="term" value="C:perinuclear region of cytoplasm"/>
    <property type="evidence" value="ECO:0007669"/>
    <property type="project" value="Ensembl"/>
</dbReference>
<dbReference type="GO" id="GO:0005886">
    <property type="term" value="C:plasma membrane"/>
    <property type="evidence" value="ECO:0007669"/>
    <property type="project" value="Ensembl"/>
</dbReference>
<dbReference type="GO" id="GO:0032991">
    <property type="term" value="C:protein-containing complex"/>
    <property type="evidence" value="ECO:0007669"/>
    <property type="project" value="Ensembl"/>
</dbReference>
<dbReference type="GO" id="GO:0030133">
    <property type="term" value="C:transport vesicle"/>
    <property type="evidence" value="ECO:0007669"/>
    <property type="project" value="Ensembl"/>
</dbReference>
<dbReference type="GO" id="GO:0140311">
    <property type="term" value="F:protein sequestering activity"/>
    <property type="evidence" value="ECO:0007669"/>
    <property type="project" value="Ensembl"/>
</dbReference>
<dbReference type="GO" id="GO:0031625">
    <property type="term" value="F:ubiquitin protein ligase binding"/>
    <property type="evidence" value="ECO:0007669"/>
    <property type="project" value="Ensembl"/>
</dbReference>
<dbReference type="GO" id="GO:1990830">
    <property type="term" value="P:cellular response to leukemia inhibitory factor"/>
    <property type="evidence" value="ECO:0007669"/>
    <property type="project" value="Ensembl"/>
</dbReference>
<dbReference type="GO" id="GO:0002357">
    <property type="term" value="P:defense response to tumor cell"/>
    <property type="evidence" value="ECO:0007669"/>
    <property type="project" value="Ensembl"/>
</dbReference>
<dbReference type="GO" id="GO:0090160">
    <property type="term" value="P:Golgi to lysosome transport"/>
    <property type="evidence" value="ECO:0007669"/>
    <property type="project" value="Ensembl"/>
</dbReference>
<dbReference type="GO" id="GO:0012502">
    <property type="term" value="P:induction of programmed cell death"/>
    <property type="evidence" value="ECO:0007669"/>
    <property type="project" value="Ensembl"/>
</dbReference>
<dbReference type="GO" id="GO:0097193">
    <property type="term" value="P:intrinsic apoptotic signaling pathway"/>
    <property type="evidence" value="ECO:0007669"/>
    <property type="project" value="Ensembl"/>
</dbReference>
<dbReference type="GO" id="GO:0046007">
    <property type="term" value="P:negative regulation of activated T cell proliferation"/>
    <property type="evidence" value="ECO:0007669"/>
    <property type="project" value="Ensembl"/>
</dbReference>
<dbReference type="GO" id="GO:1904093">
    <property type="term" value="P:negative regulation of autophagic cell death"/>
    <property type="evidence" value="ECO:0007669"/>
    <property type="project" value="Ensembl"/>
</dbReference>
<dbReference type="GO" id="GO:0050869">
    <property type="term" value="P:negative regulation of B cell activation"/>
    <property type="evidence" value="ECO:0007669"/>
    <property type="project" value="Ensembl"/>
</dbReference>
<dbReference type="GO" id="GO:0032703">
    <property type="term" value="P:negative regulation of interleukin-2 production"/>
    <property type="evidence" value="ECO:0007669"/>
    <property type="project" value="Ensembl"/>
</dbReference>
<dbReference type="GO" id="GO:0140646">
    <property type="term" value="P:negative regulation of pre-B cell receptor expression"/>
    <property type="evidence" value="ECO:0007669"/>
    <property type="project" value="Ensembl"/>
</dbReference>
<dbReference type="GO" id="GO:0050860">
    <property type="term" value="P:negative regulation of T cell receptor signaling pathway"/>
    <property type="evidence" value="ECO:0007669"/>
    <property type="project" value="Ensembl"/>
</dbReference>
<dbReference type="GO" id="GO:0032689">
    <property type="term" value="P:negative regulation of type II interferon production"/>
    <property type="evidence" value="ECO:0007669"/>
    <property type="project" value="Ensembl"/>
</dbReference>
<dbReference type="GO" id="GO:0032735">
    <property type="term" value="P:positive regulation of interleukin-12 production"/>
    <property type="evidence" value="ECO:0007669"/>
    <property type="project" value="Ensembl"/>
</dbReference>
<dbReference type="GO" id="GO:0032755">
    <property type="term" value="P:positive regulation of interleukin-6 production"/>
    <property type="evidence" value="ECO:0007669"/>
    <property type="project" value="Ensembl"/>
</dbReference>
<dbReference type="GO" id="GO:0097214">
    <property type="term" value="P:positive regulation of lysosomal membrane permeability"/>
    <property type="evidence" value="ECO:0007669"/>
    <property type="project" value="Ensembl"/>
</dbReference>
<dbReference type="GO" id="GO:0060907">
    <property type="term" value="P:positive regulation of macrophage cytokine production"/>
    <property type="evidence" value="ECO:0007669"/>
    <property type="project" value="Ensembl"/>
</dbReference>
<dbReference type="GO" id="GO:0043410">
    <property type="term" value="P:positive regulation of MAPK cascade"/>
    <property type="evidence" value="ECO:0007669"/>
    <property type="project" value="Ensembl"/>
</dbReference>
<dbReference type="GO" id="GO:1901224">
    <property type="term" value="P:positive regulation of non-canonical NF-kappaB signal transduction"/>
    <property type="evidence" value="ECO:0007669"/>
    <property type="project" value="Ensembl"/>
</dbReference>
<dbReference type="GO" id="GO:0031398">
    <property type="term" value="P:positive regulation of protein ubiquitination"/>
    <property type="evidence" value="ECO:0007669"/>
    <property type="project" value="Ensembl"/>
</dbReference>
<dbReference type="GO" id="GO:2000646">
    <property type="term" value="P:positive regulation of receptor catabolic process"/>
    <property type="evidence" value="ECO:0007669"/>
    <property type="project" value="Ensembl"/>
</dbReference>
<dbReference type="GO" id="GO:1903265">
    <property type="term" value="P:positive regulation of tumor necrosis factor-mediated signaling pathway"/>
    <property type="evidence" value="ECO:0007669"/>
    <property type="project" value="Ensembl"/>
</dbReference>
<dbReference type="GO" id="GO:2000060">
    <property type="term" value="P:positive regulation of ubiquitin-dependent protein catabolic process"/>
    <property type="evidence" value="ECO:0007669"/>
    <property type="project" value="Ensembl"/>
</dbReference>
<dbReference type="GO" id="GO:0006622">
    <property type="term" value="P:protein targeting to lysosome"/>
    <property type="evidence" value="ECO:0007669"/>
    <property type="project" value="Ensembl"/>
</dbReference>
<dbReference type="InterPro" id="IPR004687">
    <property type="entry name" value="LAPTM4/5"/>
</dbReference>
<dbReference type="InterPro" id="IPR018396">
    <property type="entry name" value="LAPTM_4A/5"/>
</dbReference>
<dbReference type="InterPro" id="IPR051115">
    <property type="entry name" value="LAPTM_transporter"/>
</dbReference>
<dbReference type="NCBIfam" id="TIGR00799">
    <property type="entry name" value="mtp"/>
    <property type="match status" value="1"/>
</dbReference>
<dbReference type="PANTHER" id="PTHR12479">
    <property type="entry name" value="LYSOSOMAL-ASSOCIATED TRANSMEMBRANE PROTEIN"/>
    <property type="match status" value="1"/>
</dbReference>
<dbReference type="PANTHER" id="PTHR12479:SF2">
    <property type="entry name" value="LYSOSOMAL-ASSOCIATED TRANSMEMBRANE PROTEIN 5"/>
    <property type="match status" value="1"/>
</dbReference>
<dbReference type="Pfam" id="PF03821">
    <property type="entry name" value="Mtp"/>
    <property type="match status" value="1"/>
</dbReference>
<sequence>MDPRLSAVRQTCCCFNVRIATTALAIYHVIMSVLLFIEHSVEVAHGKASCKLSQMGYLRIADLISSFLLIAMLFIISLSLLIGVVKNREKYLLPFLSLQVMDYLLCLLTLLGSYIELPAYLKLASRSRASPSKFPLMTLQLLDFCLSILTLCSSYMEVPTYLNFKSMNHMNYLPSQEDMPHNQFIKMMIIFSIAFITVLIFKVYMFKCVWRCYRFIKCMNSVEEKRNSKMLQKVVLPSYEEALSLPSKTPEGGPAPPPYSEV</sequence>
<keyword id="KW-0458">Lysosome</keyword>
<keyword id="KW-0472">Membrane</keyword>
<keyword id="KW-0597">Phosphoprotein</keyword>
<keyword id="KW-1185">Reference proteome</keyword>
<keyword id="KW-0812">Transmembrane</keyword>
<keyword id="KW-1133">Transmembrane helix</keyword>
<keyword id="KW-0813">Transport</keyword>
<accession>Q5REZ0</accession>
<comment type="function">
    <text evidence="1">May have a special functional role during embryogenesis and in adult hematopoietic cells.</text>
</comment>
<comment type="subunit">
    <text evidence="1">Binds to ubiquitin.</text>
</comment>
<comment type="subcellular location">
    <subcellularLocation>
        <location evidence="1">Lysosome membrane</location>
        <topology evidence="1">Multi-pass membrane protein</topology>
    </subcellularLocation>
</comment>
<comment type="similarity">
    <text evidence="4">Belongs to the LAPTM4/LAPTM5 transporter family.</text>
</comment>
<name>LAPM5_PONAB</name>
<evidence type="ECO:0000250" key="1"/>
<evidence type="ECO:0000250" key="2">
    <source>
        <dbReference type="UniProtKB" id="Q61168"/>
    </source>
</evidence>
<evidence type="ECO:0000255" key="3"/>
<evidence type="ECO:0000305" key="4"/>
<protein>
    <recommendedName>
        <fullName>Lysosomal-associated transmembrane protein 5</fullName>
    </recommendedName>
    <alternativeName>
        <fullName>Lysosomal-associated multitransmembrane protein 5</fullName>
    </alternativeName>
</protein>
<feature type="chain" id="PRO_0000084359" description="Lysosomal-associated transmembrane protein 5">
    <location>
        <begin position="1"/>
        <end position="262"/>
    </location>
</feature>
<feature type="transmembrane region" description="Helical" evidence="3">
    <location>
        <begin position="19"/>
        <end position="39"/>
    </location>
</feature>
<feature type="transmembrane region" description="Helical" evidence="3">
    <location>
        <begin position="64"/>
        <end position="84"/>
    </location>
</feature>
<feature type="transmembrane region" description="Helical" evidence="3">
    <location>
        <begin position="92"/>
        <end position="112"/>
    </location>
</feature>
<feature type="transmembrane region" description="Helical" evidence="3">
    <location>
        <begin position="134"/>
        <end position="154"/>
    </location>
</feature>
<feature type="transmembrane region" description="Helical" evidence="3">
    <location>
        <begin position="184"/>
        <end position="204"/>
    </location>
</feature>
<feature type="modified residue" description="Phosphotyrosine" evidence="2">
    <location>
        <position position="259"/>
    </location>
</feature>
<reference key="1">
    <citation type="submission" date="2004-11" db="EMBL/GenBank/DDBJ databases">
        <authorList>
            <consortium name="The German cDNA consortium"/>
        </authorList>
    </citation>
    <scope>NUCLEOTIDE SEQUENCE [LARGE SCALE MRNA]</scope>
    <source>
        <tissue>Kidney</tissue>
    </source>
</reference>
<gene>
    <name type="primary">LAPTM5</name>
</gene>
<organism>
    <name type="scientific">Pongo abelii</name>
    <name type="common">Sumatran orangutan</name>
    <name type="synonym">Pongo pygmaeus abelii</name>
    <dbReference type="NCBI Taxonomy" id="9601"/>
    <lineage>
        <taxon>Eukaryota</taxon>
        <taxon>Metazoa</taxon>
        <taxon>Chordata</taxon>
        <taxon>Craniata</taxon>
        <taxon>Vertebrata</taxon>
        <taxon>Euteleostomi</taxon>
        <taxon>Mammalia</taxon>
        <taxon>Eutheria</taxon>
        <taxon>Euarchontoglires</taxon>
        <taxon>Primates</taxon>
        <taxon>Haplorrhini</taxon>
        <taxon>Catarrhini</taxon>
        <taxon>Hominidae</taxon>
        <taxon>Pongo</taxon>
    </lineage>
</organism>